<sequence length="353" mass="39559">MTIAVGRVTKEENDLFDIMDDWLRRDRFVFVGWSGLLLFPCAYFALGGWFTGTTFVTSWYTHGLASSYLEGCNFLTAAVSTPANSLAHSLLLLWGPEAQGDFTRWCQLGGLWTFVALHGAFALIGFMLRQFELARSVQLRPYNAISFSGPIAVFVSVFLIYPLGQSGWFFAPSFGVAAIFRFILFFQGFHNWTLNPFHMMGVAGVLGAALLCAIHGATVENTLFEDGDGANTFRAFNPTQAEETYSMVTANRFWSQIFGVAFSNKRWLHFFMLFVPVTGLWMSAIGVVGLALNLRAYDFVSQEIRAAEDPEFETFYTKNILLNEGIRAWMAAQDQPHENLIFPEEVLPRGNAL</sequence>
<accession>Q6ENY1</accession>
<geneLocation type="chloroplast"/>
<gene>
    <name evidence="2" type="primary">psbD</name>
</gene>
<feature type="initiator methionine" description="Removed" evidence="1">
    <location>
        <position position="1"/>
    </location>
</feature>
<feature type="chain" id="PRO_0000226923" description="Photosystem II D2 protein">
    <location>
        <begin position="2"/>
        <end position="353"/>
    </location>
</feature>
<feature type="transmembrane region" description="Helical" evidence="2">
    <location>
        <begin position="41"/>
        <end position="61"/>
    </location>
</feature>
<feature type="transmembrane region" description="Helical" evidence="2">
    <location>
        <begin position="125"/>
        <end position="141"/>
    </location>
</feature>
<feature type="transmembrane region" description="Helical" evidence="2">
    <location>
        <begin position="153"/>
        <end position="166"/>
    </location>
</feature>
<feature type="transmembrane region" description="Helical" evidence="2">
    <location>
        <begin position="208"/>
        <end position="228"/>
    </location>
</feature>
<feature type="transmembrane region" description="Helical" evidence="2">
    <location>
        <begin position="279"/>
        <end position="295"/>
    </location>
</feature>
<feature type="binding site" description="axial binding residue" evidence="2">
    <location>
        <position position="118"/>
    </location>
    <ligand>
        <name>chlorophyll a</name>
        <dbReference type="ChEBI" id="CHEBI:58416"/>
        <label>ChlzD2</label>
    </ligand>
    <ligandPart>
        <name>Mg</name>
        <dbReference type="ChEBI" id="CHEBI:25107"/>
    </ligandPart>
</feature>
<feature type="binding site" evidence="2">
    <location>
        <position position="130"/>
    </location>
    <ligand>
        <name>pheophytin a</name>
        <dbReference type="ChEBI" id="CHEBI:136840"/>
        <label>D2</label>
    </ligand>
</feature>
<feature type="binding site" evidence="2">
    <location>
        <position position="143"/>
    </location>
    <ligand>
        <name>pheophytin a</name>
        <dbReference type="ChEBI" id="CHEBI:136840"/>
        <label>D2</label>
    </ligand>
</feature>
<feature type="binding site" description="axial binding residue" evidence="2">
    <location>
        <position position="198"/>
    </location>
    <ligand>
        <name>chlorophyll a</name>
        <dbReference type="ChEBI" id="CHEBI:58416"/>
        <label>PD2</label>
    </ligand>
    <ligandPart>
        <name>Mg</name>
        <dbReference type="ChEBI" id="CHEBI:25107"/>
    </ligandPart>
</feature>
<feature type="binding site" evidence="2">
    <location>
        <position position="215"/>
    </location>
    <ligand>
        <name>a plastoquinone</name>
        <dbReference type="ChEBI" id="CHEBI:17757"/>
        <label>Q(A)</label>
    </ligand>
</feature>
<feature type="binding site" evidence="2">
    <location>
        <position position="215"/>
    </location>
    <ligand>
        <name>Fe cation</name>
        <dbReference type="ChEBI" id="CHEBI:24875"/>
        <note>ligand shared with heterodimeric partner</note>
    </ligand>
</feature>
<feature type="binding site" evidence="2">
    <location>
        <position position="262"/>
    </location>
    <ligand>
        <name>a plastoquinone</name>
        <dbReference type="ChEBI" id="CHEBI:17757"/>
        <label>Q(A)</label>
    </ligand>
</feature>
<feature type="binding site" evidence="2">
    <location>
        <position position="269"/>
    </location>
    <ligand>
        <name>Fe cation</name>
        <dbReference type="ChEBI" id="CHEBI:24875"/>
        <note>ligand shared with heterodimeric partner</note>
    </ligand>
</feature>
<feature type="modified residue" description="N-acetylthreonine" evidence="1">
    <location>
        <position position="2"/>
    </location>
</feature>
<feature type="modified residue" description="Phosphothreonine" evidence="1">
    <location>
        <position position="2"/>
    </location>
</feature>
<dbReference type="EC" id="1.10.3.9" evidence="2"/>
<dbReference type="EMBL" id="AP006714">
    <property type="protein sequence ID" value="BAD27276.1"/>
    <property type="molecule type" value="Genomic_DNA"/>
</dbReference>
<dbReference type="RefSeq" id="YP_009389555.1">
    <property type="nucleotide sequence ID" value="NC_035224.1"/>
</dbReference>
<dbReference type="SMR" id="Q6ENY1"/>
<dbReference type="GeneID" id="33347893"/>
<dbReference type="GO" id="GO:0009535">
    <property type="term" value="C:chloroplast thylakoid membrane"/>
    <property type="evidence" value="ECO:0007669"/>
    <property type="project" value="UniProtKB-SubCell"/>
</dbReference>
<dbReference type="GO" id="GO:0009523">
    <property type="term" value="C:photosystem II"/>
    <property type="evidence" value="ECO:0007669"/>
    <property type="project" value="UniProtKB-KW"/>
</dbReference>
<dbReference type="GO" id="GO:0016168">
    <property type="term" value="F:chlorophyll binding"/>
    <property type="evidence" value="ECO:0007669"/>
    <property type="project" value="UniProtKB-UniRule"/>
</dbReference>
<dbReference type="GO" id="GO:0045156">
    <property type="term" value="F:electron transporter, transferring electrons within the cyclic electron transport pathway of photosynthesis activity"/>
    <property type="evidence" value="ECO:0007669"/>
    <property type="project" value="InterPro"/>
</dbReference>
<dbReference type="GO" id="GO:0005506">
    <property type="term" value="F:iron ion binding"/>
    <property type="evidence" value="ECO:0007669"/>
    <property type="project" value="UniProtKB-UniRule"/>
</dbReference>
<dbReference type="GO" id="GO:0010242">
    <property type="term" value="F:oxygen evolving activity"/>
    <property type="evidence" value="ECO:0007669"/>
    <property type="project" value="UniProtKB-EC"/>
</dbReference>
<dbReference type="GO" id="GO:0009772">
    <property type="term" value="P:photosynthetic electron transport in photosystem II"/>
    <property type="evidence" value="ECO:0007669"/>
    <property type="project" value="InterPro"/>
</dbReference>
<dbReference type="CDD" id="cd09288">
    <property type="entry name" value="Photosystem-II_D2"/>
    <property type="match status" value="1"/>
</dbReference>
<dbReference type="FunFam" id="1.20.85.10:FF:000001">
    <property type="entry name" value="photosystem II D2 protein-like"/>
    <property type="match status" value="1"/>
</dbReference>
<dbReference type="Gene3D" id="1.20.85.10">
    <property type="entry name" value="Photosystem II protein D1-like"/>
    <property type="match status" value="1"/>
</dbReference>
<dbReference type="HAMAP" id="MF_01383">
    <property type="entry name" value="PSII_PsbD_D2"/>
    <property type="match status" value="1"/>
</dbReference>
<dbReference type="InterPro" id="IPR055266">
    <property type="entry name" value="D1/D2"/>
</dbReference>
<dbReference type="InterPro" id="IPR036854">
    <property type="entry name" value="Photo_II_D1/D2_sf"/>
</dbReference>
<dbReference type="InterPro" id="IPR000484">
    <property type="entry name" value="Photo_RC_L/M"/>
</dbReference>
<dbReference type="InterPro" id="IPR055265">
    <property type="entry name" value="Photo_RC_L/M_CS"/>
</dbReference>
<dbReference type="InterPro" id="IPR005868">
    <property type="entry name" value="PSII_PsbD/D2"/>
</dbReference>
<dbReference type="NCBIfam" id="TIGR01152">
    <property type="entry name" value="psbD"/>
    <property type="match status" value="1"/>
</dbReference>
<dbReference type="PANTHER" id="PTHR33149:SF12">
    <property type="entry name" value="PHOTOSYSTEM II D2 PROTEIN"/>
    <property type="match status" value="1"/>
</dbReference>
<dbReference type="PANTHER" id="PTHR33149">
    <property type="entry name" value="PHOTOSYSTEM II PROTEIN D1"/>
    <property type="match status" value="1"/>
</dbReference>
<dbReference type="Pfam" id="PF00124">
    <property type="entry name" value="Photo_RC"/>
    <property type="match status" value="1"/>
</dbReference>
<dbReference type="PRINTS" id="PR00256">
    <property type="entry name" value="REACTNCENTRE"/>
</dbReference>
<dbReference type="SUPFAM" id="SSF81483">
    <property type="entry name" value="Bacterial photosystem II reaction centre, L and M subunits"/>
    <property type="match status" value="1"/>
</dbReference>
<dbReference type="PROSITE" id="PS00244">
    <property type="entry name" value="REACTION_CENTER"/>
    <property type="match status" value="1"/>
</dbReference>
<reference key="1">
    <citation type="journal article" date="2004" name="DNA Res.">
        <title>Complete nucleotide sequence of the sugarcane (Saccharum officinarum) chloroplast genome: a comparative analysis of four monocot chloroplast genomes.</title>
        <authorList>
            <person name="Asano T."/>
            <person name="Tsudzuki T."/>
            <person name="Takahashi S."/>
            <person name="Shimada H."/>
            <person name="Kadowaki K."/>
        </authorList>
    </citation>
    <scope>NUCLEOTIDE SEQUENCE [LARGE SCALE GENOMIC DNA]</scope>
</reference>
<proteinExistence type="inferred from homology"/>
<organism>
    <name type="scientific">Saccharum officinarum</name>
    <name type="common">Sugarcane</name>
    <dbReference type="NCBI Taxonomy" id="4547"/>
    <lineage>
        <taxon>Eukaryota</taxon>
        <taxon>Viridiplantae</taxon>
        <taxon>Streptophyta</taxon>
        <taxon>Embryophyta</taxon>
        <taxon>Tracheophyta</taxon>
        <taxon>Spermatophyta</taxon>
        <taxon>Magnoliopsida</taxon>
        <taxon>Liliopsida</taxon>
        <taxon>Poales</taxon>
        <taxon>Poaceae</taxon>
        <taxon>PACMAD clade</taxon>
        <taxon>Panicoideae</taxon>
        <taxon>Andropogonodae</taxon>
        <taxon>Andropogoneae</taxon>
        <taxon>Saccharinae</taxon>
        <taxon>Saccharum</taxon>
        <taxon>Saccharum officinarum species complex</taxon>
    </lineage>
</organism>
<protein>
    <recommendedName>
        <fullName evidence="2">Photosystem II D2 protein</fullName>
        <shortName evidence="2">PSII D2 protein</shortName>
        <ecNumber evidence="2">1.10.3.9</ecNumber>
    </recommendedName>
    <alternativeName>
        <fullName evidence="2">Photosystem Q(A) protein</fullName>
    </alternativeName>
</protein>
<evidence type="ECO:0000250" key="1">
    <source>
        <dbReference type="UniProtKB" id="P56761"/>
    </source>
</evidence>
<evidence type="ECO:0000255" key="2">
    <source>
        <dbReference type="HAMAP-Rule" id="MF_01383"/>
    </source>
</evidence>
<comment type="function">
    <text evidence="2">Photosystem II (PSII) is a light-driven water:plastoquinone oxidoreductase that uses light energy to abstract electrons from H(2)O, generating O(2) and a proton gradient subsequently used for ATP formation. It consists of a core antenna complex that captures photons, and an electron transfer chain that converts photonic excitation into a charge separation. The D1/D2 (PsbA/PsbD) reaction center heterodimer binds P680, the primary electron donor of PSII as well as several subsequent electron acceptors. D2 is needed for assembly of a stable PSII complex.</text>
</comment>
<comment type="catalytic activity">
    <reaction evidence="2">
        <text>2 a plastoquinone + 4 hnu + 2 H2O = 2 a plastoquinol + O2</text>
        <dbReference type="Rhea" id="RHEA:36359"/>
        <dbReference type="Rhea" id="RHEA-COMP:9561"/>
        <dbReference type="Rhea" id="RHEA-COMP:9562"/>
        <dbReference type="ChEBI" id="CHEBI:15377"/>
        <dbReference type="ChEBI" id="CHEBI:15379"/>
        <dbReference type="ChEBI" id="CHEBI:17757"/>
        <dbReference type="ChEBI" id="CHEBI:30212"/>
        <dbReference type="ChEBI" id="CHEBI:62192"/>
        <dbReference type="EC" id="1.10.3.9"/>
    </reaction>
</comment>
<comment type="cofactor">
    <text evidence="2">The D1/D2 heterodimer binds P680, chlorophylls that are the primary electron donor of PSII, and subsequent electron acceptors. It shares a non-heme iron and each subunit binds pheophytin, quinone, additional chlorophylls, carotenoids and lipids. There is also a Cl(-1) ion associated with D1 and D2, which is required for oxygen evolution. The PSII complex binds additional chlorophylls, carotenoids and specific lipids.</text>
</comment>
<comment type="subunit">
    <text evidence="2">PSII is composed of 1 copy each of membrane proteins PsbA, PsbB, PsbC, PsbD, PsbE, PsbF, PsbH, PsbI, PsbJ, PsbK, PsbL, PsbM, PsbT, PsbX, PsbY, PsbZ, Psb30/Ycf12, at least 3 peripheral proteins of the oxygen-evolving complex and a large number of cofactors. It forms dimeric complexes.</text>
</comment>
<comment type="subcellular location">
    <subcellularLocation>
        <location evidence="2">Plastid</location>
        <location evidence="2">Chloroplast thylakoid membrane</location>
        <topology evidence="2">Multi-pass membrane protein</topology>
    </subcellularLocation>
</comment>
<comment type="miscellaneous">
    <text evidence="2">2 of the reaction center chlorophylls (ChlD1 and ChlD2) are entirely coordinated by water.</text>
</comment>
<comment type="similarity">
    <text evidence="2">Belongs to the reaction center PufL/M/PsbA/D family.</text>
</comment>
<keyword id="KW-0007">Acetylation</keyword>
<keyword id="KW-0148">Chlorophyll</keyword>
<keyword id="KW-0150">Chloroplast</keyword>
<keyword id="KW-0157">Chromophore</keyword>
<keyword id="KW-0249">Electron transport</keyword>
<keyword id="KW-0408">Iron</keyword>
<keyword id="KW-0460">Magnesium</keyword>
<keyword id="KW-0472">Membrane</keyword>
<keyword id="KW-0479">Metal-binding</keyword>
<keyword id="KW-0560">Oxidoreductase</keyword>
<keyword id="KW-0597">Phosphoprotein</keyword>
<keyword id="KW-0602">Photosynthesis</keyword>
<keyword id="KW-0604">Photosystem II</keyword>
<keyword id="KW-0934">Plastid</keyword>
<keyword id="KW-0793">Thylakoid</keyword>
<keyword id="KW-0812">Transmembrane</keyword>
<keyword id="KW-1133">Transmembrane helix</keyword>
<keyword id="KW-0813">Transport</keyword>
<name>PSBD_SACOF</name>